<gene>
    <name type="primary">PON2</name>
</gene>
<reference key="1">
    <citation type="journal article" date="1996" name="Genomics">
        <title>The human serum paraoxonase/arylesterase gene (PON1) is one member of a multigene family.</title>
        <authorList>
            <person name="Primo-Parmo S.L."/>
            <person name="Sorenson R.C."/>
            <person name="Teiber J."/>
            <person name="La Du B.N."/>
        </authorList>
    </citation>
    <scope>NUCLEOTIDE SEQUENCE [MRNA] (ISOFORM 1)</scope>
    <scope>VARIANT CYS-311</scope>
    <source>
        <tissue>Liver</tissue>
    </source>
</reference>
<reference key="2">
    <citation type="journal article" date="1998" name="Gene">
        <title>Human PON2 gene at 7q21.3: cloning, multiple mRNA forms, and missense polymorphisms in the coding sequence.</title>
        <authorList>
            <person name="Mochizuki H."/>
            <person name="Scherer S.W."/>
            <person name="Xi T."/>
            <person name="Nickle D.C."/>
            <person name="Majer M."/>
            <person name="Huizenga J.J."/>
            <person name="Tsui L.-C."/>
            <person name="Prochazka M."/>
        </authorList>
    </citation>
    <scope>NUCLEOTIDE SEQUENCE [MRNA] (ISOFORM 2)</scope>
    <scope>NUCLEOTIDE SEQUENCE [GENOMIC DNA] OF 50-67</scope>
    <scope>ALTERNATIVE SPLICING</scope>
    <scope>VARIANT GLY-148</scope>
</reference>
<reference key="3">
    <citation type="submission" date="2003-02" db="EMBL/GenBank/DDBJ databases">
        <title>Paraoxonase mRNA,nirs splice variant1.</title>
        <authorList>
            <person name="Sameshima E."/>
            <person name="Tabata Y."/>
            <person name="Hayashi A."/>
            <person name="Iida K."/>
            <person name="Mitsuyama M."/>
            <person name="Kanai S."/>
            <person name="Furuya T."/>
            <person name="Saito T."/>
        </authorList>
    </citation>
    <scope>NUCLEOTIDE SEQUENCE [MRNA] (ISOFORM 3)</scope>
</reference>
<reference key="4">
    <citation type="journal article" date="2004" name="Nat. Genet.">
        <title>Complete sequencing and characterization of 21,243 full-length human cDNAs.</title>
        <authorList>
            <person name="Ota T."/>
            <person name="Suzuki Y."/>
            <person name="Nishikawa T."/>
            <person name="Otsuki T."/>
            <person name="Sugiyama T."/>
            <person name="Irie R."/>
            <person name="Wakamatsu A."/>
            <person name="Hayashi K."/>
            <person name="Sato H."/>
            <person name="Nagai K."/>
            <person name="Kimura K."/>
            <person name="Makita H."/>
            <person name="Sekine M."/>
            <person name="Obayashi M."/>
            <person name="Nishi T."/>
            <person name="Shibahara T."/>
            <person name="Tanaka T."/>
            <person name="Ishii S."/>
            <person name="Yamamoto J."/>
            <person name="Saito K."/>
            <person name="Kawai Y."/>
            <person name="Isono Y."/>
            <person name="Nakamura Y."/>
            <person name="Nagahari K."/>
            <person name="Murakami K."/>
            <person name="Yasuda T."/>
            <person name="Iwayanagi T."/>
            <person name="Wagatsuma M."/>
            <person name="Shiratori A."/>
            <person name="Sudo H."/>
            <person name="Hosoiri T."/>
            <person name="Kaku Y."/>
            <person name="Kodaira H."/>
            <person name="Kondo H."/>
            <person name="Sugawara M."/>
            <person name="Takahashi M."/>
            <person name="Kanda K."/>
            <person name="Yokoi T."/>
            <person name="Furuya T."/>
            <person name="Kikkawa E."/>
            <person name="Omura Y."/>
            <person name="Abe K."/>
            <person name="Kamihara K."/>
            <person name="Katsuta N."/>
            <person name="Sato K."/>
            <person name="Tanikawa M."/>
            <person name="Yamazaki M."/>
            <person name="Ninomiya K."/>
            <person name="Ishibashi T."/>
            <person name="Yamashita H."/>
            <person name="Murakawa K."/>
            <person name="Fujimori K."/>
            <person name="Tanai H."/>
            <person name="Kimata M."/>
            <person name="Watanabe M."/>
            <person name="Hiraoka S."/>
            <person name="Chiba Y."/>
            <person name="Ishida S."/>
            <person name="Ono Y."/>
            <person name="Takiguchi S."/>
            <person name="Watanabe S."/>
            <person name="Yosida M."/>
            <person name="Hotuta T."/>
            <person name="Kusano J."/>
            <person name="Kanehori K."/>
            <person name="Takahashi-Fujii A."/>
            <person name="Hara H."/>
            <person name="Tanase T.-O."/>
            <person name="Nomura Y."/>
            <person name="Togiya S."/>
            <person name="Komai F."/>
            <person name="Hara R."/>
            <person name="Takeuchi K."/>
            <person name="Arita M."/>
            <person name="Imose N."/>
            <person name="Musashino K."/>
            <person name="Yuuki H."/>
            <person name="Oshima A."/>
            <person name="Sasaki N."/>
            <person name="Aotsuka S."/>
            <person name="Yoshikawa Y."/>
            <person name="Matsunawa H."/>
            <person name="Ichihara T."/>
            <person name="Shiohata N."/>
            <person name="Sano S."/>
            <person name="Moriya S."/>
            <person name="Momiyama H."/>
            <person name="Satoh N."/>
            <person name="Takami S."/>
            <person name="Terashima Y."/>
            <person name="Suzuki O."/>
            <person name="Nakagawa S."/>
            <person name="Senoh A."/>
            <person name="Mizoguchi H."/>
            <person name="Goto Y."/>
            <person name="Shimizu F."/>
            <person name="Wakebe H."/>
            <person name="Hishigaki H."/>
            <person name="Watanabe T."/>
            <person name="Sugiyama A."/>
            <person name="Takemoto M."/>
            <person name="Kawakami B."/>
            <person name="Yamazaki M."/>
            <person name="Watanabe K."/>
            <person name="Kumagai A."/>
            <person name="Itakura S."/>
            <person name="Fukuzumi Y."/>
            <person name="Fujimori Y."/>
            <person name="Komiyama M."/>
            <person name="Tashiro H."/>
            <person name="Tanigami A."/>
            <person name="Fujiwara T."/>
            <person name="Ono T."/>
            <person name="Yamada K."/>
            <person name="Fujii Y."/>
            <person name="Ozaki K."/>
            <person name="Hirao M."/>
            <person name="Ohmori Y."/>
            <person name="Kawabata A."/>
            <person name="Hikiji T."/>
            <person name="Kobatake N."/>
            <person name="Inagaki H."/>
            <person name="Ikema Y."/>
            <person name="Okamoto S."/>
            <person name="Okitani R."/>
            <person name="Kawakami T."/>
            <person name="Noguchi S."/>
            <person name="Itoh T."/>
            <person name="Shigeta K."/>
            <person name="Senba T."/>
            <person name="Matsumura K."/>
            <person name="Nakajima Y."/>
            <person name="Mizuno T."/>
            <person name="Morinaga M."/>
            <person name="Sasaki M."/>
            <person name="Togashi T."/>
            <person name="Oyama M."/>
            <person name="Hata H."/>
            <person name="Watanabe M."/>
            <person name="Komatsu T."/>
            <person name="Mizushima-Sugano J."/>
            <person name="Satoh T."/>
            <person name="Shirai Y."/>
            <person name="Takahashi Y."/>
            <person name="Nakagawa K."/>
            <person name="Okumura K."/>
            <person name="Nagase T."/>
            <person name="Nomura N."/>
            <person name="Kikuchi H."/>
            <person name="Masuho Y."/>
            <person name="Yamashita R."/>
            <person name="Nakai K."/>
            <person name="Yada T."/>
            <person name="Nakamura Y."/>
            <person name="Ohara O."/>
            <person name="Isogai T."/>
            <person name="Sugano S."/>
        </authorList>
    </citation>
    <scope>NUCLEOTIDE SEQUENCE [LARGE SCALE MRNA] (ISOFORMS 2 AND 3)</scope>
    <source>
        <tissue>Subthalamic nucleus</tissue>
        <tissue>Testis</tissue>
    </source>
</reference>
<reference key="5">
    <citation type="submission" date="2003-01" db="EMBL/GenBank/DDBJ databases">
        <authorList>
            <consortium name="SeattleSNPs variation discovery resource"/>
        </authorList>
    </citation>
    <scope>NUCLEOTIDE SEQUENCE [GENOMIC DNA]</scope>
    <scope>VARIANTS GLY-148 AND LEU-172</scope>
</reference>
<reference key="6">
    <citation type="journal article" date="2003" name="Nature">
        <title>The DNA sequence of human chromosome 7.</title>
        <authorList>
            <person name="Hillier L.W."/>
            <person name="Fulton R.S."/>
            <person name="Fulton L.A."/>
            <person name="Graves T.A."/>
            <person name="Pepin K.H."/>
            <person name="Wagner-McPherson C."/>
            <person name="Layman D."/>
            <person name="Maas J."/>
            <person name="Jaeger S."/>
            <person name="Walker R."/>
            <person name="Wylie K."/>
            <person name="Sekhon M."/>
            <person name="Becker M.C."/>
            <person name="O'Laughlin M.D."/>
            <person name="Schaller M.E."/>
            <person name="Fewell G.A."/>
            <person name="Delehaunty K.D."/>
            <person name="Miner T.L."/>
            <person name="Nash W.E."/>
            <person name="Cordes M."/>
            <person name="Du H."/>
            <person name="Sun H."/>
            <person name="Edwards J."/>
            <person name="Bradshaw-Cordum H."/>
            <person name="Ali J."/>
            <person name="Andrews S."/>
            <person name="Isak A."/>
            <person name="Vanbrunt A."/>
            <person name="Nguyen C."/>
            <person name="Du F."/>
            <person name="Lamar B."/>
            <person name="Courtney L."/>
            <person name="Kalicki J."/>
            <person name="Ozersky P."/>
            <person name="Bielicki L."/>
            <person name="Scott K."/>
            <person name="Holmes A."/>
            <person name="Harkins R."/>
            <person name="Harris A."/>
            <person name="Strong C.M."/>
            <person name="Hou S."/>
            <person name="Tomlinson C."/>
            <person name="Dauphin-Kohlberg S."/>
            <person name="Kozlowicz-Reilly A."/>
            <person name="Leonard S."/>
            <person name="Rohlfing T."/>
            <person name="Rock S.M."/>
            <person name="Tin-Wollam A.-M."/>
            <person name="Abbott A."/>
            <person name="Minx P."/>
            <person name="Maupin R."/>
            <person name="Strowmatt C."/>
            <person name="Latreille P."/>
            <person name="Miller N."/>
            <person name="Johnson D."/>
            <person name="Murray J."/>
            <person name="Woessner J.P."/>
            <person name="Wendl M.C."/>
            <person name="Yang S.-P."/>
            <person name="Schultz B.R."/>
            <person name="Wallis J.W."/>
            <person name="Spieth J."/>
            <person name="Bieri T.A."/>
            <person name="Nelson J.O."/>
            <person name="Berkowicz N."/>
            <person name="Wohldmann P.E."/>
            <person name="Cook L.L."/>
            <person name="Hickenbotham M.T."/>
            <person name="Eldred J."/>
            <person name="Williams D."/>
            <person name="Bedell J.A."/>
            <person name="Mardis E.R."/>
            <person name="Clifton S.W."/>
            <person name="Chissoe S.L."/>
            <person name="Marra M.A."/>
            <person name="Raymond C."/>
            <person name="Haugen E."/>
            <person name="Gillett W."/>
            <person name="Zhou Y."/>
            <person name="James R."/>
            <person name="Phelps K."/>
            <person name="Iadanoto S."/>
            <person name="Bubb K."/>
            <person name="Simms E."/>
            <person name="Levy R."/>
            <person name="Clendenning J."/>
            <person name="Kaul R."/>
            <person name="Kent W.J."/>
            <person name="Furey T.S."/>
            <person name="Baertsch R.A."/>
            <person name="Brent M.R."/>
            <person name="Keibler E."/>
            <person name="Flicek P."/>
            <person name="Bork P."/>
            <person name="Suyama M."/>
            <person name="Bailey J.A."/>
            <person name="Portnoy M.E."/>
            <person name="Torrents D."/>
            <person name="Chinwalla A.T."/>
            <person name="Gish W.R."/>
            <person name="Eddy S.R."/>
            <person name="McPherson J.D."/>
            <person name="Olson M.V."/>
            <person name="Eichler E.E."/>
            <person name="Green E.D."/>
            <person name="Waterston R.H."/>
            <person name="Wilson R.K."/>
        </authorList>
    </citation>
    <scope>NUCLEOTIDE SEQUENCE [LARGE SCALE GENOMIC DNA]</scope>
</reference>
<reference key="7">
    <citation type="journal article" date="2003" name="Science">
        <title>Human chromosome 7: DNA sequence and biology.</title>
        <authorList>
            <person name="Scherer S.W."/>
            <person name="Cheung J."/>
            <person name="MacDonald J.R."/>
            <person name="Osborne L.R."/>
            <person name="Nakabayashi K."/>
            <person name="Herbrick J.-A."/>
            <person name="Carson A.R."/>
            <person name="Parker-Katiraee L."/>
            <person name="Skaug J."/>
            <person name="Khaja R."/>
            <person name="Zhang J."/>
            <person name="Hudek A.K."/>
            <person name="Li M."/>
            <person name="Haddad M."/>
            <person name="Duggan G.E."/>
            <person name="Fernandez B.A."/>
            <person name="Kanematsu E."/>
            <person name="Gentles S."/>
            <person name="Christopoulos C.C."/>
            <person name="Choufani S."/>
            <person name="Kwasnicka D."/>
            <person name="Zheng X.H."/>
            <person name="Lai Z."/>
            <person name="Nusskern D.R."/>
            <person name="Zhang Q."/>
            <person name="Gu Z."/>
            <person name="Lu F."/>
            <person name="Zeesman S."/>
            <person name="Nowaczyk M.J."/>
            <person name="Teshima I."/>
            <person name="Chitayat D."/>
            <person name="Shuman C."/>
            <person name="Weksberg R."/>
            <person name="Zackai E.H."/>
            <person name="Grebe T.A."/>
            <person name="Cox S.R."/>
            <person name="Kirkpatrick S.J."/>
            <person name="Rahman N."/>
            <person name="Friedman J.M."/>
            <person name="Heng H.H.Q."/>
            <person name="Pelicci P.G."/>
            <person name="Lo-Coco F."/>
            <person name="Belloni E."/>
            <person name="Shaffer L.G."/>
            <person name="Pober B."/>
            <person name="Morton C.C."/>
            <person name="Gusella J.F."/>
            <person name="Bruns G.A.P."/>
            <person name="Korf B.R."/>
            <person name="Quade B.J."/>
            <person name="Ligon A.H."/>
            <person name="Ferguson H."/>
            <person name="Higgins A.W."/>
            <person name="Leach N.T."/>
            <person name="Herrick S.R."/>
            <person name="Lemyre E."/>
            <person name="Farra C.G."/>
            <person name="Kim H.-G."/>
            <person name="Summers A.M."/>
            <person name="Gripp K.W."/>
            <person name="Roberts W."/>
            <person name="Szatmari P."/>
            <person name="Winsor E.J.T."/>
            <person name="Grzeschik K.-H."/>
            <person name="Teebi A."/>
            <person name="Minassian B.A."/>
            <person name="Kere J."/>
            <person name="Armengol L."/>
            <person name="Pujana M.A."/>
            <person name="Estivill X."/>
            <person name="Wilson M.D."/>
            <person name="Koop B.F."/>
            <person name="Tosi S."/>
            <person name="Moore G.E."/>
            <person name="Boright A.P."/>
            <person name="Zlotorynski E."/>
            <person name="Kerem B."/>
            <person name="Kroisel P.M."/>
            <person name="Petek E."/>
            <person name="Oscier D.G."/>
            <person name="Mould S.J."/>
            <person name="Doehner H."/>
            <person name="Doehner K."/>
            <person name="Rommens J.M."/>
            <person name="Vincent J.B."/>
            <person name="Venter J.C."/>
            <person name="Li P.W."/>
            <person name="Mural R.J."/>
            <person name="Adams M.D."/>
            <person name="Tsui L.-C."/>
        </authorList>
    </citation>
    <scope>NUCLEOTIDE SEQUENCE [LARGE SCALE GENOMIC DNA]</scope>
</reference>
<reference key="8">
    <citation type="journal article" date="2004" name="Genome Res.">
        <title>The status, quality, and expansion of the NIH full-length cDNA project: the Mammalian Gene Collection (MGC).</title>
        <authorList>
            <consortium name="The MGC Project Team"/>
        </authorList>
    </citation>
    <scope>NUCLEOTIDE SEQUENCE [LARGE SCALE MRNA] (ISOFORM 2)</scope>
    <source>
        <tissue>Skin</tissue>
    </source>
</reference>
<reference key="9">
    <citation type="journal article" date="2001" name="J. Biol. Chem.">
        <title>Paraoxonase-2 is a ubiquitously expressed protein with antioxidant properties and is capable of preventing cell-mediated oxidative modification of low density lipoprotein.</title>
        <authorList>
            <person name="Ng C.J."/>
            <person name="Wadleigh D.J."/>
            <person name="Gangopadhyay A."/>
            <person name="Hama S."/>
            <person name="Grijalva V.R."/>
            <person name="Navab M."/>
            <person name="Fogelman A.M."/>
            <person name="Reddy S.T."/>
        </authorList>
    </citation>
    <scope>FUNCTION</scope>
    <scope>TISSUE SPECIFICITY</scope>
    <scope>SUBCELLULAR LOCATION</scope>
</reference>
<reference key="10">
    <citation type="journal article" date="2005" name="J. Lipid Res.">
        <title>Human paraoxonases (PON1, PON2, and PON3) are lactonases with overlapping and distinct substrate specificities.</title>
        <authorList>
            <person name="Draganov D.I."/>
            <person name="Teiber J.F."/>
            <person name="Speelman A."/>
            <person name="Osawa Y."/>
            <person name="Sunahara R."/>
            <person name="La Du B.N."/>
        </authorList>
    </citation>
    <scope>FUNCTION</scope>
    <scope>CATALYTIC ACTIVITY</scope>
    <scope>SUBUNIT</scope>
</reference>
<reference key="11">
    <citation type="journal article" date="2009" name="J. Proteome Res.">
        <title>Glycoproteomics analysis of human liver tissue by combination of multiple enzyme digestion and hydrazide chemistry.</title>
        <authorList>
            <person name="Chen R."/>
            <person name="Jiang X."/>
            <person name="Sun D."/>
            <person name="Han G."/>
            <person name="Wang F."/>
            <person name="Ye M."/>
            <person name="Wang L."/>
            <person name="Zou H."/>
        </authorList>
    </citation>
    <scope>GLYCOSYLATION [LARGE SCALE ANALYSIS] AT ASN-254</scope>
    <source>
        <tissue>Liver</tissue>
    </source>
</reference>
<reference key="12">
    <citation type="journal article" date="2011" name="BMC Syst. Biol.">
        <title>Initial characterization of the human central proteome.</title>
        <authorList>
            <person name="Burkard T.R."/>
            <person name="Planyavsky M."/>
            <person name="Kaupe I."/>
            <person name="Breitwieser F.P."/>
            <person name="Buerckstuemmer T."/>
            <person name="Bennett K.L."/>
            <person name="Superti-Furga G."/>
            <person name="Colinge J."/>
        </authorList>
    </citation>
    <scope>IDENTIFICATION BY MASS SPECTROMETRY [LARGE SCALE ANALYSIS]</scope>
</reference>
<reference key="13">
    <citation type="journal article" date="2014" name="J. Proteomics">
        <title>An enzyme assisted RP-RPLC approach for in-depth analysis of human liver phosphoproteome.</title>
        <authorList>
            <person name="Bian Y."/>
            <person name="Song C."/>
            <person name="Cheng K."/>
            <person name="Dong M."/>
            <person name="Wang F."/>
            <person name="Huang J."/>
            <person name="Sun D."/>
            <person name="Wang L."/>
            <person name="Ye M."/>
            <person name="Zou H."/>
        </authorList>
    </citation>
    <scope>IDENTIFICATION BY MASS SPECTROMETRY [LARGE SCALE ANALYSIS]</scope>
    <source>
        <tissue>Liver</tissue>
    </source>
</reference>
<reference key="14">
    <citation type="journal article" date="2015" name="Proteomics">
        <title>N-terminome analysis of the human mitochondrial proteome.</title>
        <authorList>
            <person name="Vaca Jacome A.S."/>
            <person name="Rabilloud T."/>
            <person name="Schaeffer-Reiss C."/>
            <person name="Rompais M."/>
            <person name="Ayoub D."/>
            <person name="Lane L."/>
            <person name="Bairoch A."/>
            <person name="Van Dorsselaer A."/>
            <person name="Carapito C."/>
        </authorList>
    </citation>
    <scope>IDENTIFICATION BY MASS SPECTROMETRY [LARGE SCALE ANALYSIS]</scope>
</reference>
<reference key="15">
    <citation type="journal article" date="1997" name="J. Clin. Endocrinol. Metab.">
        <title>Paraoxonase-2 gene (PON2) G148 variant associated with elevated fasting plasma glucose in noninsulin-dependent diabetes mellitus.</title>
        <authorList>
            <person name="Hegele R.A."/>
            <person name="Connelly P.W."/>
            <person name="Scherer S.W."/>
            <person name="Hanley A.J.G."/>
            <person name="Harris S.B."/>
            <person name="Tsui L.-C."/>
            <person name="Zinman B."/>
        </authorList>
    </citation>
    <scope>VARIANT GLY-148</scope>
</reference>
<reference key="16">
    <citation type="journal article" date="1998" name="Am. J. Hum. Genet.">
        <title>DNA polymorphisms in two paraoxonase genes (PON1 and PON2) are associated with the risk of coronary heart disease.</title>
        <authorList>
            <person name="Sanghera D.K."/>
            <person name="Aston C.E."/>
            <person name="Saha N."/>
            <person name="Kamboh M.I."/>
        </authorList>
    </citation>
    <scope>POLYMORPHISM</scope>
</reference>
<name>PON2_HUMAN</name>
<protein>
    <recommendedName>
        <fullName>Serum paraoxonase/arylesterase 2</fullName>
        <shortName>PON 2</shortName>
        <ecNumber>3.1.1.2</ecNumber>
        <ecNumber>3.1.1.81</ecNumber>
    </recommendedName>
    <alternativeName>
        <fullName>Aromatic esterase 2</fullName>
        <shortName>A-esterase 2</shortName>
    </alternativeName>
    <alternativeName>
        <fullName>Serum aryldialkylphosphatase 2</fullName>
    </alternativeName>
</protein>
<comment type="function">
    <text evidence="3 4">Capable of hydrolyzing lactones and a number of aromatic carboxylic acid esters. Has antioxidant activity. Is not associated with high density lipoprotein. Prevents LDL lipid peroxidation, reverses the oxidation of mildly oxidized LDL, and inhibits the ability of MM-LDL to induce monocyte chemotaxis.</text>
</comment>
<comment type="catalytic activity">
    <reaction evidence="4">
        <text>a phenyl acetate + H2O = a phenol + acetate + H(+)</text>
        <dbReference type="Rhea" id="RHEA:17309"/>
        <dbReference type="ChEBI" id="CHEBI:15377"/>
        <dbReference type="ChEBI" id="CHEBI:15378"/>
        <dbReference type="ChEBI" id="CHEBI:30089"/>
        <dbReference type="ChEBI" id="CHEBI:33853"/>
        <dbReference type="ChEBI" id="CHEBI:140310"/>
        <dbReference type="EC" id="3.1.1.2"/>
    </reaction>
</comment>
<comment type="catalytic activity">
    <reaction evidence="4">
        <text>an N-acyl-L-homoserine lactone + H2O = an N-acyl-L-homoserine + H(+)</text>
        <dbReference type="Rhea" id="RHEA:22576"/>
        <dbReference type="ChEBI" id="CHEBI:15377"/>
        <dbReference type="ChEBI" id="CHEBI:15378"/>
        <dbReference type="ChEBI" id="CHEBI:55474"/>
        <dbReference type="ChEBI" id="CHEBI:58921"/>
        <dbReference type="EC" id="3.1.1.81"/>
    </reaction>
</comment>
<comment type="cofactor">
    <cofactor evidence="1">
        <name>Ca(2+)</name>
        <dbReference type="ChEBI" id="CHEBI:29108"/>
    </cofactor>
    <text evidence="1">Binds 2 calcium ions per subunit.</text>
</comment>
<comment type="subunit">
    <text evidence="4">Homotrimer.</text>
</comment>
<comment type="interaction">
    <interactant intactId="EBI-3909798">
        <id>Q15165</id>
    </interactant>
    <interactant intactId="EBI-2806068">
        <id>Q12891</id>
        <label>HYAL2</label>
    </interactant>
    <organismsDiffer>false</organismsDiffer>
    <experiments>2</experiments>
</comment>
<comment type="subcellular location">
    <subcellularLocation>
        <location evidence="3">Membrane</location>
        <topology evidence="3">Peripheral membrane protein</topology>
    </subcellularLocation>
</comment>
<comment type="alternative products">
    <event type="alternative splicing"/>
    <isoform>
        <id>Q15165-2</id>
        <name>2</name>
        <sequence type="displayed"/>
    </isoform>
    <isoform>
        <id>Q15165-1</id>
        <name>1</name>
        <sequence type="described" ref="VSP_004533"/>
    </isoform>
    <isoform>
        <id>Q15165-3</id>
        <name>3</name>
        <sequence type="described" ref="VSP_040715"/>
    </isoform>
</comment>
<comment type="tissue specificity">
    <text evidence="3">Widely expressed with highest expression in liver, lung, placenta, testis and heart.</text>
</comment>
<comment type="PTM">
    <text evidence="1">The signal sequence is not cleaved.</text>
</comment>
<comment type="polymorphism">
    <text evidence="8">Ser-311 is associated with an increased risk of cornary heart disease.</text>
</comment>
<comment type="similarity">
    <text evidence="14">Belongs to the paraoxonase family.</text>
</comment>
<accession>Q15165</accession>
<accession>A4D1H7</accession>
<accession>B2RCP9</accession>
<accession>B4DJD5</accession>
<accession>O15114</accession>
<accession>O15115</accession>
<accession>O75856</accession>
<accession>Q5FBX7</accession>
<accession>Q86YL0</accession>
<keyword id="KW-0025">Alternative splicing</keyword>
<keyword id="KW-0106">Calcium</keyword>
<keyword id="KW-1015">Disulfide bond</keyword>
<keyword id="KW-0325">Glycoprotein</keyword>
<keyword id="KW-0378">Hydrolase</keyword>
<keyword id="KW-0472">Membrane</keyword>
<keyword id="KW-0479">Metal-binding</keyword>
<keyword id="KW-1267">Proteomics identification</keyword>
<keyword id="KW-1185">Reference proteome</keyword>
<keyword id="KW-0732">Signal</keyword>
<evidence type="ECO:0000250" key="1"/>
<evidence type="ECO:0000255" key="2"/>
<evidence type="ECO:0000269" key="3">
    <source>
    </source>
</evidence>
<evidence type="ECO:0000269" key="4">
    <source>
    </source>
</evidence>
<evidence type="ECO:0000269" key="5">
    <source>
    </source>
</evidence>
<evidence type="ECO:0000269" key="6">
    <source>
    </source>
</evidence>
<evidence type="ECO:0000269" key="7">
    <source>
    </source>
</evidence>
<evidence type="ECO:0000269" key="8">
    <source>
    </source>
</evidence>
<evidence type="ECO:0000269" key="9">
    <source>
    </source>
</evidence>
<evidence type="ECO:0000269" key="10">
    <source ref="5"/>
</evidence>
<evidence type="ECO:0000303" key="11">
    <source>
    </source>
</evidence>
<evidence type="ECO:0000303" key="12">
    <source>
    </source>
</evidence>
<evidence type="ECO:0000303" key="13">
    <source ref="3"/>
</evidence>
<evidence type="ECO:0000305" key="14"/>
<organism>
    <name type="scientific">Homo sapiens</name>
    <name type="common">Human</name>
    <dbReference type="NCBI Taxonomy" id="9606"/>
    <lineage>
        <taxon>Eukaryota</taxon>
        <taxon>Metazoa</taxon>
        <taxon>Chordata</taxon>
        <taxon>Craniata</taxon>
        <taxon>Vertebrata</taxon>
        <taxon>Euteleostomi</taxon>
        <taxon>Mammalia</taxon>
        <taxon>Eutheria</taxon>
        <taxon>Euarchontoglires</taxon>
        <taxon>Primates</taxon>
        <taxon>Haplorrhini</taxon>
        <taxon>Catarrhini</taxon>
        <taxon>Hominidae</taxon>
        <taxon>Homo</taxon>
    </lineage>
</organism>
<sequence length="354" mass="39381">MGRLVAVGLLGIALALLGERLLALRNRLKASREVESVDLPHCHLIKGIEAGSEDIDILPNGLAFFSVGLKFPGLHSFAPDKPGGILMMDLKEEKPRARELRISRGFDLASFNPHGISTFIDNDDTVYLFVVNHPEFKNTVEIFKFEEAENSLLHLKTVKHELLPSVNDITAVGPAHFYATNDHYFSDPFLKYLETYLNLHWANVVYYSPNEVKVVAEGFDSANGINISPDDKYIYVADILAHEIHVLEKHTNMNLTQLKVLELDTLVDNLSIDPSSGDIWVGCHPNGQKLFVYDPNNPPSSEVLRIQNILSEKPTVTTVYANNGSVLQGSSVASVYDGKLLIGTLYHRALYCEL</sequence>
<proteinExistence type="evidence at protein level"/>
<dbReference type="EC" id="3.1.1.2"/>
<dbReference type="EC" id="3.1.1.81"/>
<dbReference type="EMBL" id="L48513">
    <property type="protein sequence ID" value="AAC41995.1"/>
    <property type="molecule type" value="mRNA"/>
</dbReference>
<dbReference type="EMBL" id="AF001601">
    <property type="protein sequence ID" value="AAC27944.1"/>
    <property type="molecule type" value="mRNA"/>
</dbReference>
<dbReference type="EMBL" id="AF001602">
    <property type="protein sequence ID" value="AAC27945.1"/>
    <property type="molecule type" value="mRNA"/>
</dbReference>
<dbReference type="EMBL" id="AF001603">
    <property type="protein sequence ID" value="AAC27946.1"/>
    <property type="molecule type" value="Genomic_DNA"/>
</dbReference>
<dbReference type="EMBL" id="AB102891">
    <property type="protein sequence ID" value="BAD89420.1"/>
    <property type="molecule type" value="mRNA"/>
</dbReference>
<dbReference type="EMBL" id="AK291103">
    <property type="protein sequence ID" value="BAF83792.1"/>
    <property type="molecule type" value="mRNA"/>
</dbReference>
<dbReference type="EMBL" id="AK296029">
    <property type="protein sequence ID" value="BAG58797.1"/>
    <property type="molecule type" value="mRNA"/>
</dbReference>
<dbReference type="EMBL" id="AK315209">
    <property type="protein sequence ID" value="BAG37646.1"/>
    <property type="molecule type" value="mRNA"/>
</dbReference>
<dbReference type="EMBL" id="AY210982">
    <property type="protein sequence ID" value="AAO18083.1"/>
    <property type="molecule type" value="Genomic_DNA"/>
</dbReference>
<dbReference type="EMBL" id="AC005021">
    <property type="protein sequence ID" value="AAC62431.1"/>
    <property type="molecule type" value="Genomic_DNA"/>
</dbReference>
<dbReference type="EMBL" id="CH236949">
    <property type="protein sequence ID" value="EAL24131.1"/>
    <property type="molecule type" value="Genomic_DNA"/>
</dbReference>
<dbReference type="EMBL" id="BC040010">
    <property type="protein sequence ID" value="AAH40010.1"/>
    <property type="molecule type" value="mRNA"/>
</dbReference>
<dbReference type="CCDS" id="CCDS47644.1">
    <molecule id="Q15165-3"/>
</dbReference>
<dbReference type="CCDS" id="CCDS5640.1">
    <molecule id="Q15165-2"/>
</dbReference>
<dbReference type="RefSeq" id="NP_000296.2">
    <molecule id="Q15165-2"/>
    <property type="nucleotide sequence ID" value="NM_000305.3"/>
</dbReference>
<dbReference type="RefSeq" id="NP_001018171.1">
    <molecule id="Q15165-3"/>
    <property type="nucleotide sequence ID" value="NM_001018161.2"/>
</dbReference>
<dbReference type="SMR" id="Q15165"/>
<dbReference type="BioGRID" id="111441">
    <property type="interactions" value="255"/>
</dbReference>
<dbReference type="DIP" id="DIP-61136N"/>
<dbReference type="FunCoup" id="Q15165">
    <property type="interactions" value="871"/>
</dbReference>
<dbReference type="IntAct" id="Q15165">
    <property type="interactions" value="155"/>
</dbReference>
<dbReference type="MINT" id="Q15165"/>
<dbReference type="STRING" id="9606.ENSP00000488838"/>
<dbReference type="BindingDB" id="Q15165"/>
<dbReference type="ChEMBL" id="CHEMBL4295823"/>
<dbReference type="GlyConnect" id="1741">
    <property type="glycosylation" value="8 N-Linked glycans (2 sites)"/>
</dbReference>
<dbReference type="GlyCosmos" id="Q15165">
    <property type="glycosylation" value="3 sites, 8 glycans"/>
</dbReference>
<dbReference type="GlyGen" id="Q15165">
    <property type="glycosylation" value="6 sites, 22 N-linked glycans (4 sites), 1 O-linked glycan (1 site)"/>
</dbReference>
<dbReference type="iPTMnet" id="Q15165"/>
<dbReference type="PhosphoSitePlus" id="Q15165"/>
<dbReference type="SwissPalm" id="Q15165"/>
<dbReference type="BioMuta" id="PON2"/>
<dbReference type="DMDM" id="325511384"/>
<dbReference type="jPOST" id="Q15165"/>
<dbReference type="MassIVE" id="Q15165"/>
<dbReference type="PaxDb" id="9606-ENSP00000222572"/>
<dbReference type="PeptideAtlas" id="Q15165"/>
<dbReference type="ProteomicsDB" id="60475">
    <molecule id="Q15165-2"/>
</dbReference>
<dbReference type="ProteomicsDB" id="60476">
    <molecule id="Q15165-1"/>
</dbReference>
<dbReference type="ProteomicsDB" id="60477">
    <molecule id="Q15165-3"/>
</dbReference>
<dbReference type="Pumba" id="Q15165"/>
<dbReference type="Antibodypedia" id="30147">
    <property type="antibodies" value="422 antibodies from 38 providers"/>
</dbReference>
<dbReference type="DNASU" id="5445"/>
<dbReference type="Ensembl" id="ENST00000222572.8">
    <molecule id="Q15165-2"/>
    <property type="protein sequence ID" value="ENSP00000222572.3"/>
    <property type="gene ID" value="ENSG00000105854.13"/>
</dbReference>
<dbReference type="Ensembl" id="ENST00000433091.6">
    <molecule id="Q15165-3"/>
    <property type="protein sequence ID" value="ENSP00000404622.2"/>
    <property type="gene ID" value="ENSG00000105854.13"/>
</dbReference>
<dbReference type="Ensembl" id="ENST00000633531.1">
    <molecule id="Q15165-2"/>
    <property type="protein sequence ID" value="ENSP00000488838.1"/>
    <property type="gene ID" value="ENSG00000105854.13"/>
</dbReference>
<dbReference type="GeneID" id="5445"/>
<dbReference type="KEGG" id="hsa:5445"/>
<dbReference type="MANE-Select" id="ENST00000222572.8">
    <property type="protein sequence ID" value="ENSP00000222572.3"/>
    <property type="RefSeq nucleotide sequence ID" value="NM_000305.3"/>
    <property type="RefSeq protein sequence ID" value="NP_000296.2"/>
</dbReference>
<dbReference type="UCSC" id="uc003unv.4">
    <molecule id="Q15165-2"/>
    <property type="organism name" value="human"/>
</dbReference>
<dbReference type="AGR" id="HGNC:9205"/>
<dbReference type="CTD" id="5445"/>
<dbReference type="DisGeNET" id="5445"/>
<dbReference type="GeneCards" id="PON2"/>
<dbReference type="HGNC" id="HGNC:9205">
    <property type="gene designation" value="PON2"/>
</dbReference>
<dbReference type="HPA" id="ENSG00000105854">
    <property type="expression patterns" value="Tissue enhanced (brain)"/>
</dbReference>
<dbReference type="MalaCards" id="PON2"/>
<dbReference type="MIM" id="602447">
    <property type="type" value="gene"/>
</dbReference>
<dbReference type="neXtProt" id="NX_Q15165"/>
<dbReference type="OpenTargets" id="ENSG00000105854"/>
<dbReference type="Orphanet" id="803">
    <property type="disease" value="Amyotrophic lateral sclerosis"/>
</dbReference>
<dbReference type="PharmGKB" id="PA33530"/>
<dbReference type="VEuPathDB" id="HostDB:ENSG00000105854"/>
<dbReference type="eggNOG" id="ENOG502QUCT">
    <property type="taxonomic scope" value="Eukaryota"/>
</dbReference>
<dbReference type="GeneTree" id="ENSGT00390000008932"/>
<dbReference type="HOGENOM" id="CLU_209318_0_0_1"/>
<dbReference type="InParanoid" id="Q15165"/>
<dbReference type="OMA" id="PDMNLTQ"/>
<dbReference type="OrthoDB" id="423498at2759"/>
<dbReference type="PAN-GO" id="Q15165">
    <property type="GO annotations" value="2 GO annotations based on evolutionary models"/>
</dbReference>
<dbReference type="PhylomeDB" id="Q15165"/>
<dbReference type="TreeFam" id="TF322436"/>
<dbReference type="BRENDA" id="3.1.1.2">
    <property type="organism ID" value="2681"/>
</dbReference>
<dbReference type="BRENDA" id="3.1.1.25">
    <property type="organism ID" value="2681"/>
</dbReference>
<dbReference type="PathwayCommons" id="Q15165"/>
<dbReference type="Reactome" id="R-HSA-2142688">
    <property type="pathway name" value="Synthesis of 5-eicosatetraenoic acids"/>
</dbReference>
<dbReference type="SignaLink" id="Q15165"/>
<dbReference type="SIGNOR" id="Q15165"/>
<dbReference type="BioGRID-ORCS" id="5445">
    <property type="hits" value="9 hits in 1161 CRISPR screens"/>
</dbReference>
<dbReference type="ChiTaRS" id="PON2">
    <property type="organism name" value="human"/>
</dbReference>
<dbReference type="GeneWiki" id="PON2"/>
<dbReference type="GenomeRNAi" id="5445"/>
<dbReference type="Pharos" id="Q15165">
    <property type="development level" value="Tbio"/>
</dbReference>
<dbReference type="PRO" id="PR:Q15165"/>
<dbReference type="Proteomes" id="UP000005640">
    <property type="component" value="Chromosome 7"/>
</dbReference>
<dbReference type="RNAct" id="Q15165">
    <property type="molecule type" value="protein"/>
</dbReference>
<dbReference type="Bgee" id="ENSG00000105854">
    <property type="expression patterns" value="Expressed in right lung and 208 other cell types or tissues"/>
</dbReference>
<dbReference type="ExpressionAtlas" id="Q15165">
    <property type="expression patterns" value="baseline and differential"/>
</dbReference>
<dbReference type="GO" id="GO:0005576">
    <property type="term" value="C:extracellular region"/>
    <property type="evidence" value="ECO:0000304"/>
    <property type="project" value="Reactome"/>
</dbReference>
<dbReference type="GO" id="GO:0005886">
    <property type="term" value="C:plasma membrane"/>
    <property type="evidence" value="ECO:0000314"/>
    <property type="project" value="BHF-UCL"/>
</dbReference>
<dbReference type="GO" id="GO:0102007">
    <property type="term" value="F:acyl-L-homoserine-lactone lactonohydrolase activity"/>
    <property type="evidence" value="ECO:0000314"/>
    <property type="project" value="ARUK-UCL"/>
</dbReference>
<dbReference type="GO" id="GO:0004064">
    <property type="term" value="F:arylesterase activity"/>
    <property type="evidence" value="ECO:0000318"/>
    <property type="project" value="GO_Central"/>
</dbReference>
<dbReference type="GO" id="GO:0046872">
    <property type="term" value="F:metal ion binding"/>
    <property type="evidence" value="ECO:0007669"/>
    <property type="project" value="UniProtKB-KW"/>
</dbReference>
<dbReference type="GO" id="GO:0042803">
    <property type="term" value="F:protein homodimerization activity"/>
    <property type="evidence" value="ECO:0000353"/>
    <property type="project" value="BHF-UCL"/>
</dbReference>
<dbReference type="GO" id="GO:1901335">
    <property type="term" value="P:lactone catabolic process"/>
    <property type="evidence" value="ECO:0000314"/>
    <property type="project" value="BHF-UCL"/>
</dbReference>
<dbReference type="GO" id="GO:0009636">
    <property type="term" value="P:response to toxic substance"/>
    <property type="evidence" value="ECO:0000318"/>
    <property type="project" value="GO_Central"/>
</dbReference>
<dbReference type="FunFam" id="2.120.10.30:FF:000023">
    <property type="entry name" value="Serum paraoxonase/arylesterase 2"/>
    <property type="match status" value="1"/>
</dbReference>
<dbReference type="Gene3D" id="2.120.10.30">
    <property type="entry name" value="TolB, C-terminal domain"/>
    <property type="match status" value="1"/>
</dbReference>
<dbReference type="InterPro" id="IPR011042">
    <property type="entry name" value="6-blade_b-propeller_TolB-like"/>
</dbReference>
<dbReference type="InterPro" id="IPR002640">
    <property type="entry name" value="Arylesterase"/>
</dbReference>
<dbReference type="InterPro" id="IPR008364">
    <property type="entry name" value="Paraoxonase2"/>
</dbReference>
<dbReference type="InterPro" id="IPR051288">
    <property type="entry name" value="Serum_paraoxonase/arylesterase"/>
</dbReference>
<dbReference type="PANTHER" id="PTHR11799">
    <property type="entry name" value="PARAOXONASE"/>
    <property type="match status" value="1"/>
</dbReference>
<dbReference type="PANTHER" id="PTHR11799:SF17">
    <property type="entry name" value="SERUM PARAOXONASE_ARYLESTERASE 2"/>
    <property type="match status" value="1"/>
</dbReference>
<dbReference type="Pfam" id="PF01731">
    <property type="entry name" value="Arylesterase"/>
    <property type="match status" value="1"/>
</dbReference>
<dbReference type="PRINTS" id="PR01785">
    <property type="entry name" value="PARAOXONASE"/>
</dbReference>
<dbReference type="PRINTS" id="PR01787">
    <property type="entry name" value="PARAOXONASE2"/>
</dbReference>
<dbReference type="SUPFAM" id="SSF63829">
    <property type="entry name" value="Calcium-dependent phosphotriesterase"/>
    <property type="match status" value="1"/>
</dbReference>
<feature type="chain" id="PRO_0000223287" description="Serum paraoxonase/arylesterase 2">
    <location>
        <begin position="1"/>
        <end position="354"/>
    </location>
</feature>
<feature type="signal peptide" description="Not cleaved" evidence="1">
    <location>
        <begin position="1"/>
        <end status="unknown"/>
    </location>
</feature>
<feature type="active site" description="Proton acceptor" evidence="1">
    <location>
        <position position="114"/>
    </location>
</feature>
<feature type="binding site" evidence="1">
    <location>
        <position position="53"/>
    </location>
    <ligand>
        <name>Ca(2+)</name>
        <dbReference type="ChEBI" id="CHEBI:29108"/>
        <label>1</label>
        <note>catalytic</note>
    </ligand>
</feature>
<feature type="binding site" evidence="1">
    <location>
        <position position="54"/>
    </location>
    <ligand>
        <name>Ca(2+)</name>
        <dbReference type="ChEBI" id="CHEBI:29108"/>
        <label>2</label>
    </ligand>
</feature>
<feature type="binding site" evidence="1">
    <location>
        <position position="116"/>
    </location>
    <ligand>
        <name>Ca(2+)</name>
        <dbReference type="ChEBI" id="CHEBI:29108"/>
        <label>2</label>
    </ligand>
</feature>
<feature type="binding site" evidence="1">
    <location>
        <position position="167"/>
    </location>
    <ligand>
        <name>Ca(2+)</name>
        <dbReference type="ChEBI" id="CHEBI:29108"/>
        <label>1</label>
        <note>catalytic</note>
    </ligand>
</feature>
<feature type="binding site" evidence="1">
    <location>
        <position position="168"/>
    </location>
    <ligand>
        <name>Ca(2+)</name>
        <dbReference type="ChEBI" id="CHEBI:29108"/>
        <label>2</label>
    </ligand>
</feature>
<feature type="binding site" evidence="1">
    <location>
        <position position="223"/>
    </location>
    <ligand>
        <name>Ca(2+)</name>
        <dbReference type="ChEBI" id="CHEBI:29108"/>
        <label>1</label>
        <note>catalytic</note>
    </ligand>
</feature>
<feature type="binding site" evidence="1">
    <location>
        <position position="268"/>
    </location>
    <ligand>
        <name>Ca(2+)</name>
        <dbReference type="ChEBI" id="CHEBI:29108"/>
        <label>1</label>
        <note>catalytic</note>
    </ligand>
</feature>
<feature type="binding site" evidence="1">
    <location>
        <position position="269"/>
    </location>
    <ligand>
        <name>Ca(2+)</name>
        <dbReference type="ChEBI" id="CHEBI:29108"/>
        <label>1</label>
        <note>catalytic</note>
    </ligand>
</feature>
<feature type="glycosylation site" description="N-linked (GlcNAc...) asparagine" evidence="5">
    <location>
        <position position="254"/>
    </location>
</feature>
<feature type="glycosylation site" description="N-linked (GlcNAc...) asparagine" evidence="2">
    <location>
        <position position="269"/>
    </location>
</feature>
<feature type="glycosylation site" description="N-linked (GlcNAc...) asparagine" evidence="2">
    <location>
        <position position="323"/>
    </location>
</feature>
<feature type="disulfide bond" evidence="1">
    <location>
        <begin position="42"/>
        <end position="352"/>
    </location>
</feature>
<feature type="splice variant" id="VSP_004533" description="In isoform 1." evidence="12">
    <original>MGRLVAVGLLGIALAL</original>
    <variation>MGAWVGCGLAGDRAGF</variation>
    <location>
        <begin position="1"/>
        <end position="16"/>
    </location>
</feature>
<feature type="splice variant" id="VSP_040715" description="In isoform 3." evidence="11 13">
    <location>
        <begin position="123"/>
        <end position="134"/>
    </location>
</feature>
<feature type="sequence variant" id="VAR_006045" description="Correlates with elevated mean fasting plasma glucose level; dbSNP:rs12026." evidence="7 9 10">
    <original>A</original>
    <variation>G</variation>
    <location>
        <position position="148"/>
    </location>
</feature>
<feature type="sequence variant" id="VAR_020786" description="In dbSNP:rs17876152." evidence="10">
    <original>V</original>
    <variation>L</variation>
    <location>
        <position position="172"/>
    </location>
</feature>
<feature type="sequence variant" id="VAR_006046" description="In dbSNP:rs7493." evidence="6">
    <original>S</original>
    <variation>C</variation>
    <location>
        <position position="311"/>
    </location>
</feature>
<feature type="sequence conflict" description="In Ref. 2; AAC27945." evidence="14" ref="2">
    <original>EA</original>
    <variation>VW</variation>
    <location>
        <begin position="49"/>
        <end position="50"/>
    </location>
</feature>
<feature type="sequence conflict" description="In Ref. 4; BAG37646." evidence="14" ref="4">
    <original>E</original>
    <variation>D</variation>
    <location>
        <position position="53"/>
    </location>
</feature>
<feature type="sequence conflict" description="In Ref. 4; BAG58797." evidence="14" ref="4">
    <original>A</original>
    <variation>V</variation>
    <location>
        <position position="63"/>
    </location>
</feature>
<feature type="sequence conflict" description="In Ref. 1; AAC41995." evidence="14" ref="1">
    <original>E</original>
    <variation>G</variation>
    <location>
        <position position="194"/>
    </location>
</feature>
<feature type="sequence conflict" description="In Ref. 2; AAC27944 and 3; BAD89420." evidence="14" ref="2 3">
    <original>G</original>
    <variation>V</variation>
    <location>
        <position position="282"/>
    </location>
</feature>